<name>TPIS_ACIF2</name>
<accession>B7J7U7</accession>
<sequence length="257" mass="27314">MRPTMVAGNWKMNGLSGDAVHLTQAILHAGLEPMRPEVVIFPPFTLLHAVSQEAKSSALRWGGQNLFWEASGAYTGEISGAMLRDMGCRYVLIGHSERRQIFAESDAQIVQKIKAALLSGLIPVVCVGETEAERAQGLTDAVLRRQLEAVLPLLNLEASQPNLIIAYEPVWAIGTGLSASPEQAQAVHVFIRELAAAYSAQLARRLLLLYGGSVKGNNAAALFDQADIDGALVGGASLQAGEFIQICRAAESAGRGG</sequence>
<dbReference type="EC" id="5.3.1.1" evidence="1"/>
<dbReference type="EMBL" id="CP001219">
    <property type="protein sequence ID" value="ACK80228.1"/>
    <property type="molecule type" value="Genomic_DNA"/>
</dbReference>
<dbReference type="SMR" id="B7J7U7"/>
<dbReference type="STRING" id="243159.AFE_2633"/>
<dbReference type="PaxDb" id="243159-AFE_2633"/>
<dbReference type="KEGG" id="afr:AFE_2633"/>
<dbReference type="eggNOG" id="COG0149">
    <property type="taxonomic scope" value="Bacteria"/>
</dbReference>
<dbReference type="HOGENOM" id="CLU_024251_2_1_6"/>
<dbReference type="UniPathway" id="UPA00109">
    <property type="reaction ID" value="UER00189"/>
</dbReference>
<dbReference type="UniPathway" id="UPA00138"/>
<dbReference type="Proteomes" id="UP000001362">
    <property type="component" value="Chromosome"/>
</dbReference>
<dbReference type="GO" id="GO:0005829">
    <property type="term" value="C:cytosol"/>
    <property type="evidence" value="ECO:0007669"/>
    <property type="project" value="TreeGrafter"/>
</dbReference>
<dbReference type="GO" id="GO:0004807">
    <property type="term" value="F:triose-phosphate isomerase activity"/>
    <property type="evidence" value="ECO:0007669"/>
    <property type="project" value="UniProtKB-UniRule"/>
</dbReference>
<dbReference type="GO" id="GO:0006094">
    <property type="term" value="P:gluconeogenesis"/>
    <property type="evidence" value="ECO:0007669"/>
    <property type="project" value="UniProtKB-UniRule"/>
</dbReference>
<dbReference type="GO" id="GO:0046166">
    <property type="term" value="P:glyceraldehyde-3-phosphate biosynthetic process"/>
    <property type="evidence" value="ECO:0007669"/>
    <property type="project" value="TreeGrafter"/>
</dbReference>
<dbReference type="GO" id="GO:0019563">
    <property type="term" value="P:glycerol catabolic process"/>
    <property type="evidence" value="ECO:0007669"/>
    <property type="project" value="TreeGrafter"/>
</dbReference>
<dbReference type="GO" id="GO:0006096">
    <property type="term" value="P:glycolytic process"/>
    <property type="evidence" value="ECO:0007669"/>
    <property type="project" value="UniProtKB-UniRule"/>
</dbReference>
<dbReference type="CDD" id="cd00311">
    <property type="entry name" value="TIM"/>
    <property type="match status" value="1"/>
</dbReference>
<dbReference type="FunFam" id="3.20.20.70:FF:000016">
    <property type="entry name" value="Triosephosphate isomerase"/>
    <property type="match status" value="1"/>
</dbReference>
<dbReference type="Gene3D" id="3.20.20.70">
    <property type="entry name" value="Aldolase class I"/>
    <property type="match status" value="1"/>
</dbReference>
<dbReference type="HAMAP" id="MF_00147_B">
    <property type="entry name" value="TIM_B"/>
    <property type="match status" value="1"/>
</dbReference>
<dbReference type="InterPro" id="IPR013785">
    <property type="entry name" value="Aldolase_TIM"/>
</dbReference>
<dbReference type="InterPro" id="IPR035990">
    <property type="entry name" value="TIM_sf"/>
</dbReference>
<dbReference type="InterPro" id="IPR022896">
    <property type="entry name" value="TrioseP_Isoase_bac/euk"/>
</dbReference>
<dbReference type="InterPro" id="IPR000652">
    <property type="entry name" value="Triosephosphate_isomerase"/>
</dbReference>
<dbReference type="InterPro" id="IPR020861">
    <property type="entry name" value="Triosephosphate_isomerase_AS"/>
</dbReference>
<dbReference type="NCBIfam" id="TIGR00419">
    <property type="entry name" value="tim"/>
    <property type="match status" value="1"/>
</dbReference>
<dbReference type="PANTHER" id="PTHR21139">
    <property type="entry name" value="TRIOSEPHOSPHATE ISOMERASE"/>
    <property type="match status" value="1"/>
</dbReference>
<dbReference type="PANTHER" id="PTHR21139:SF42">
    <property type="entry name" value="TRIOSEPHOSPHATE ISOMERASE"/>
    <property type="match status" value="1"/>
</dbReference>
<dbReference type="Pfam" id="PF00121">
    <property type="entry name" value="TIM"/>
    <property type="match status" value="1"/>
</dbReference>
<dbReference type="SUPFAM" id="SSF51351">
    <property type="entry name" value="Triosephosphate isomerase (TIM)"/>
    <property type="match status" value="1"/>
</dbReference>
<dbReference type="PROSITE" id="PS00171">
    <property type="entry name" value="TIM_1"/>
    <property type="match status" value="1"/>
</dbReference>
<dbReference type="PROSITE" id="PS51440">
    <property type="entry name" value="TIM_2"/>
    <property type="match status" value="1"/>
</dbReference>
<comment type="function">
    <text evidence="1">Involved in the gluconeogenesis. Catalyzes stereospecifically the conversion of dihydroxyacetone phosphate (DHAP) to D-glyceraldehyde-3-phosphate (G3P).</text>
</comment>
<comment type="catalytic activity">
    <reaction evidence="1">
        <text>D-glyceraldehyde 3-phosphate = dihydroxyacetone phosphate</text>
        <dbReference type="Rhea" id="RHEA:18585"/>
        <dbReference type="ChEBI" id="CHEBI:57642"/>
        <dbReference type="ChEBI" id="CHEBI:59776"/>
        <dbReference type="EC" id="5.3.1.1"/>
    </reaction>
</comment>
<comment type="pathway">
    <text evidence="1">Carbohydrate biosynthesis; gluconeogenesis.</text>
</comment>
<comment type="pathway">
    <text evidence="1">Carbohydrate degradation; glycolysis; D-glyceraldehyde 3-phosphate from glycerone phosphate: step 1/1.</text>
</comment>
<comment type="subunit">
    <text evidence="1">Homodimer.</text>
</comment>
<comment type="subcellular location">
    <subcellularLocation>
        <location evidence="1">Cytoplasm</location>
    </subcellularLocation>
</comment>
<comment type="similarity">
    <text evidence="1">Belongs to the triosephosphate isomerase family.</text>
</comment>
<organism>
    <name type="scientific">Acidithiobacillus ferrooxidans (strain ATCC 23270 / DSM 14882 / CIP 104768 / NCIMB 8455)</name>
    <name type="common">Ferrobacillus ferrooxidans (strain ATCC 23270)</name>
    <dbReference type="NCBI Taxonomy" id="243159"/>
    <lineage>
        <taxon>Bacteria</taxon>
        <taxon>Pseudomonadati</taxon>
        <taxon>Pseudomonadota</taxon>
        <taxon>Acidithiobacillia</taxon>
        <taxon>Acidithiobacillales</taxon>
        <taxon>Acidithiobacillaceae</taxon>
        <taxon>Acidithiobacillus</taxon>
    </lineage>
</organism>
<proteinExistence type="inferred from homology"/>
<gene>
    <name evidence="1" type="primary">tpiA</name>
    <name type="ordered locus">AFE_2633</name>
</gene>
<protein>
    <recommendedName>
        <fullName evidence="1">Triosephosphate isomerase</fullName>
        <shortName evidence="1">TIM</shortName>
        <shortName evidence="1">TPI</shortName>
        <ecNumber evidence="1">5.3.1.1</ecNumber>
    </recommendedName>
    <alternativeName>
        <fullName evidence="1">Triose-phosphate isomerase</fullName>
    </alternativeName>
</protein>
<feature type="chain" id="PRO_1000117993" description="Triosephosphate isomerase">
    <location>
        <begin position="1"/>
        <end position="257"/>
    </location>
</feature>
<feature type="active site" description="Electrophile" evidence="1">
    <location>
        <position position="95"/>
    </location>
</feature>
<feature type="active site" description="Proton acceptor" evidence="1">
    <location>
        <position position="168"/>
    </location>
</feature>
<feature type="binding site" evidence="1">
    <location>
        <begin position="9"/>
        <end position="11"/>
    </location>
    <ligand>
        <name>substrate</name>
    </ligand>
</feature>
<feature type="binding site" evidence="1">
    <location>
        <position position="174"/>
    </location>
    <ligand>
        <name>substrate</name>
    </ligand>
</feature>
<feature type="binding site" evidence="1">
    <location>
        <position position="213"/>
    </location>
    <ligand>
        <name>substrate</name>
    </ligand>
</feature>
<feature type="binding site" evidence="1">
    <location>
        <begin position="234"/>
        <end position="235"/>
    </location>
    <ligand>
        <name>substrate</name>
    </ligand>
</feature>
<reference key="1">
    <citation type="journal article" date="2008" name="BMC Genomics">
        <title>Acidithiobacillus ferrooxidans metabolism: from genome sequence to industrial applications.</title>
        <authorList>
            <person name="Valdes J."/>
            <person name="Pedroso I."/>
            <person name="Quatrini R."/>
            <person name="Dodson R.J."/>
            <person name="Tettelin H."/>
            <person name="Blake R. II"/>
            <person name="Eisen J.A."/>
            <person name="Holmes D.S."/>
        </authorList>
    </citation>
    <scope>NUCLEOTIDE SEQUENCE [LARGE SCALE GENOMIC DNA]</scope>
    <source>
        <strain>ATCC 23270 / DSM 14882 / CIP 104768 / NCIMB 8455</strain>
    </source>
</reference>
<keyword id="KW-0963">Cytoplasm</keyword>
<keyword id="KW-0312">Gluconeogenesis</keyword>
<keyword id="KW-0324">Glycolysis</keyword>
<keyword id="KW-0413">Isomerase</keyword>
<keyword id="KW-1185">Reference proteome</keyword>
<evidence type="ECO:0000255" key="1">
    <source>
        <dbReference type="HAMAP-Rule" id="MF_00147"/>
    </source>
</evidence>